<accession>Q5FWK3</accession>
<accession>Q8C3X5</accession>
<accession>Q923D8</accession>
<organism>
    <name type="scientific">Mus musculus</name>
    <name type="common">Mouse</name>
    <dbReference type="NCBI Taxonomy" id="10090"/>
    <lineage>
        <taxon>Eukaryota</taxon>
        <taxon>Metazoa</taxon>
        <taxon>Chordata</taxon>
        <taxon>Craniata</taxon>
        <taxon>Vertebrata</taxon>
        <taxon>Euteleostomi</taxon>
        <taxon>Mammalia</taxon>
        <taxon>Eutheria</taxon>
        <taxon>Euarchontoglires</taxon>
        <taxon>Glires</taxon>
        <taxon>Rodentia</taxon>
        <taxon>Myomorpha</taxon>
        <taxon>Muroidea</taxon>
        <taxon>Muridae</taxon>
        <taxon>Murinae</taxon>
        <taxon>Mus</taxon>
        <taxon>Mus</taxon>
    </lineage>
</organism>
<name>RHG01_MOUSE</name>
<protein>
    <recommendedName>
        <fullName>Rho GTPase-activating protein 1</fullName>
    </recommendedName>
    <alternativeName>
        <fullName>Rho-type GTPase-activating protein 1</fullName>
    </alternativeName>
</protein>
<keyword id="KW-0007">Acetylation</keyword>
<keyword id="KW-0963">Cytoplasm</keyword>
<keyword id="KW-0343">GTPase activation</keyword>
<keyword id="KW-0597">Phosphoprotein</keyword>
<keyword id="KW-1185">Reference proteome</keyword>
<keyword id="KW-0729">SH3-binding</keyword>
<gene>
    <name type="primary">Arhgap1</name>
</gene>
<proteinExistence type="evidence at protein level"/>
<feature type="chain" id="PRO_0000323607" description="Rho GTPase-activating protein 1">
    <location>
        <begin position="1"/>
        <end position="439"/>
    </location>
</feature>
<feature type="domain" description="CRAL-TRIO" evidence="3">
    <location>
        <begin position="63"/>
        <end position="218"/>
    </location>
</feature>
<feature type="domain" description="Rho-GAP" evidence="4">
    <location>
        <begin position="244"/>
        <end position="431"/>
    </location>
</feature>
<feature type="region of interest" description="Disordered" evidence="5">
    <location>
        <begin position="28"/>
        <end position="55"/>
    </location>
</feature>
<feature type="short sequence motif" description="SH3-binding" evidence="1">
    <location>
        <begin position="228"/>
        <end position="238"/>
    </location>
</feature>
<feature type="compositionally biased region" description="Basic and acidic residues" evidence="5">
    <location>
        <begin position="28"/>
        <end position="48"/>
    </location>
</feature>
<feature type="site" description="Arginine finger; crucial for GTP hydrolysis by stabilizing the transition state" evidence="4">
    <location>
        <position position="282"/>
    </location>
</feature>
<feature type="modified residue" description="N-acetylmethionine" evidence="2">
    <location>
        <position position="1"/>
    </location>
</feature>
<feature type="modified residue" description="Phosphoserine" evidence="8">
    <location>
        <position position="44"/>
    </location>
</feature>
<feature type="modified residue" description="Phosphoserine" evidence="2">
    <location>
        <position position="47"/>
    </location>
</feature>
<feature type="modified residue" description="Phosphoserine" evidence="8">
    <location>
        <position position="50"/>
    </location>
</feature>
<feature type="modified residue" description="Phosphoserine" evidence="8">
    <location>
        <position position="51"/>
    </location>
</feature>
<feature type="modified residue" description="Phosphotyrosine" evidence="7">
    <location>
        <position position="65"/>
    </location>
</feature>
<feature type="modified residue" description="N6-acetyllysine" evidence="2">
    <location>
        <position position="80"/>
    </location>
</feature>
<feature type="sequence conflict" description="In Ref. 1; BAC39233." evidence="6" ref="1">
    <original>K</original>
    <variation>Q</variation>
    <location>
        <position position="168"/>
    </location>
</feature>
<feature type="sequence conflict" description="In Ref. 3; AAH06592." evidence="6" ref="3">
    <original>D</original>
    <variation>E</variation>
    <location>
        <position position="257"/>
    </location>
</feature>
<sequence>MDPLSELQDDLTLDDTSQALNQLKLASIDEKNWPSDEMPDFPKSDDSKSSSPEPVTHLKWDDPYYDIARHQIVEVAGDDKYGRKIIVFSACRMPPSHQLDHSKLLGYLKHTLDQYVESDYTLLYLHHGLTSDNKPSLSWLRDAYREFDRKYKKNIKALYIVHPTMFIKTLLILFKPLISFKFGRKIFYVNYLSELSEHVKLEQLGIPRQVLKYDDFLKSTQKSPATAPKPMPPRPPLPNQQFGVSLQHLQEKSPGQDPIPIVLRETVAYLQAHALTTEGIFRRSANTQVVREVQQKYNMGLPVDFDQYNELHLPAVILKTFLRELPEPLLTFDLYPHVVGFLNIDESQRVEVTQQVLQTLPEENYQVLHFLTAFLVQISAHCDQNKMTNTNLAVVFGPNLLWAKDAAITLKAINPINTFTKFLLDHQGELFPSTDAQGV</sequence>
<dbReference type="EMBL" id="AK084622">
    <property type="protein sequence ID" value="BAC39233.1"/>
    <property type="molecule type" value="mRNA"/>
</dbReference>
<dbReference type="EMBL" id="AL691489">
    <property type="status" value="NOT_ANNOTATED_CDS"/>
    <property type="molecule type" value="Genomic_DNA"/>
</dbReference>
<dbReference type="EMBL" id="AL714023">
    <property type="status" value="NOT_ANNOTATED_CDS"/>
    <property type="molecule type" value="Genomic_DNA"/>
</dbReference>
<dbReference type="EMBL" id="BC006592">
    <property type="protein sequence ID" value="AAH06592.1"/>
    <property type="molecule type" value="mRNA"/>
</dbReference>
<dbReference type="EMBL" id="BC089306">
    <property type="protein sequence ID" value="AAH89306.1"/>
    <property type="molecule type" value="mRNA"/>
</dbReference>
<dbReference type="CCDS" id="CCDS16437.1"/>
<dbReference type="RefSeq" id="NP_001139374.1">
    <property type="nucleotide sequence ID" value="NM_001145902.1"/>
</dbReference>
<dbReference type="RefSeq" id="NP_001346899.1">
    <property type="nucleotide sequence ID" value="NM_001359970.1"/>
</dbReference>
<dbReference type="RefSeq" id="NP_666236.3">
    <property type="nucleotide sequence ID" value="NM_146124.4"/>
</dbReference>
<dbReference type="RefSeq" id="XP_006499307.1">
    <property type="nucleotide sequence ID" value="XM_006499244.2"/>
</dbReference>
<dbReference type="RefSeq" id="XP_006499308.1">
    <property type="nucleotide sequence ID" value="XM_006499245.5"/>
</dbReference>
<dbReference type="RefSeq" id="XP_006499309.1">
    <property type="nucleotide sequence ID" value="XM_006499246.3"/>
</dbReference>
<dbReference type="RefSeq" id="XP_006499310.1">
    <property type="nucleotide sequence ID" value="XM_006499247.4"/>
</dbReference>
<dbReference type="RefSeq" id="XP_006499311.1">
    <property type="nucleotide sequence ID" value="XM_006499248.4"/>
</dbReference>
<dbReference type="RefSeq" id="XP_006499312.1">
    <property type="nucleotide sequence ID" value="XM_006499249.3"/>
</dbReference>
<dbReference type="RefSeq" id="XP_006499313.1">
    <property type="nucleotide sequence ID" value="XM_006499250.2"/>
</dbReference>
<dbReference type="RefSeq" id="XP_011237759.1">
    <property type="nucleotide sequence ID" value="XM_011239457.2"/>
</dbReference>
<dbReference type="SMR" id="Q5FWK3"/>
<dbReference type="BioGRID" id="230727">
    <property type="interactions" value="48"/>
</dbReference>
<dbReference type="FunCoup" id="Q5FWK3">
    <property type="interactions" value="2831"/>
</dbReference>
<dbReference type="IntAct" id="Q5FWK3">
    <property type="interactions" value="15"/>
</dbReference>
<dbReference type="STRING" id="10090.ENSMUSP00000106963"/>
<dbReference type="iPTMnet" id="Q5FWK3"/>
<dbReference type="PhosphoSitePlus" id="Q5FWK3"/>
<dbReference type="jPOST" id="Q5FWK3"/>
<dbReference type="PaxDb" id="10090-ENSMUSP00000106963"/>
<dbReference type="PeptideAtlas" id="Q5FWK3"/>
<dbReference type="ProteomicsDB" id="254864"/>
<dbReference type="Pumba" id="Q5FWK3"/>
<dbReference type="Antibodypedia" id="1399">
    <property type="antibodies" value="237 antibodies from 30 providers"/>
</dbReference>
<dbReference type="DNASU" id="228359"/>
<dbReference type="Ensembl" id="ENSMUST00000090614.11">
    <property type="protein sequence ID" value="ENSMUSP00000088105.5"/>
    <property type="gene ID" value="ENSMUSG00000027247.17"/>
</dbReference>
<dbReference type="Ensembl" id="ENSMUST00000111329.8">
    <property type="protein sequence ID" value="ENSMUSP00000106961.2"/>
    <property type="gene ID" value="ENSMUSG00000027247.17"/>
</dbReference>
<dbReference type="Ensembl" id="ENSMUST00000111330.3">
    <property type="protein sequence ID" value="ENSMUSP00000106962.3"/>
    <property type="gene ID" value="ENSMUSG00000027247.17"/>
</dbReference>
<dbReference type="GeneID" id="228359"/>
<dbReference type="KEGG" id="mmu:228359"/>
<dbReference type="UCSC" id="uc008kwi.2">
    <property type="organism name" value="mouse"/>
</dbReference>
<dbReference type="AGR" id="MGI:2445003"/>
<dbReference type="CTD" id="392"/>
<dbReference type="MGI" id="MGI:2445003">
    <property type="gene designation" value="Arhgap1"/>
</dbReference>
<dbReference type="VEuPathDB" id="HostDB:ENSMUSG00000027247"/>
<dbReference type="eggNOG" id="KOG4406">
    <property type="taxonomic scope" value="Eukaryota"/>
</dbReference>
<dbReference type="GeneTree" id="ENSGT00940000160630"/>
<dbReference type="HOGENOM" id="CLU_030214_1_0_1"/>
<dbReference type="InParanoid" id="Q5FWK3"/>
<dbReference type="OrthoDB" id="19923at2759"/>
<dbReference type="Reactome" id="R-MMU-8980692">
    <property type="pathway name" value="RHOA GTPase cycle"/>
</dbReference>
<dbReference type="Reactome" id="R-MMU-9013026">
    <property type="pathway name" value="RHOB GTPase cycle"/>
</dbReference>
<dbReference type="Reactome" id="R-MMU-9013106">
    <property type="pathway name" value="RHOC GTPase cycle"/>
</dbReference>
<dbReference type="Reactome" id="R-MMU-9013148">
    <property type="pathway name" value="CDC42 GTPase cycle"/>
</dbReference>
<dbReference type="Reactome" id="R-MMU-9013149">
    <property type="pathway name" value="RAC1 GTPase cycle"/>
</dbReference>
<dbReference type="Reactome" id="R-MMU-9013404">
    <property type="pathway name" value="RAC2 GTPase cycle"/>
</dbReference>
<dbReference type="Reactome" id="R-MMU-9013405">
    <property type="pathway name" value="RHOD GTPase cycle"/>
</dbReference>
<dbReference type="Reactome" id="R-MMU-9013406">
    <property type="pathway name" value="RHOQ GTPase cycle"/>
</dbReference>
<dbReference type="Reactome" id="R-MMU-9013408">
    <property type="pathway name" value="RHOG GTPase cycle"/>
</dbReference>
<dbReference type="Reactome" id="R-MMU-9013409">
    <property type="pathway name" value="RHOJ GTPase cycle"/>
</dbReference>
<dbReference type="Reactome" id="R-MMU-9013423">
    <property type="pathway name" value="RAC3 GTPase cycle"/>
</dbReference>
<dbReference type="Reactome" id="R-MMU-9035034">
    <property type="pathway name" value="RHOF GTPase cycle"/>
</dbReference>
<dbReference type="Reactome" id="R-MMU-9696270">
    <property type="pathway name" value="RND2 GTPase cycle"/>
</dbReference>
<dbReference type="BioGRID-ORCS" id="228359">
    <property type="hits" value="2 hits in 79 CRISPR screens"/>
</dbReference>
<dbReference type="ChiTaRS" id="Arhgap1">
    <property type="organism name" value="mouse"/>
</dbReference>
<dbReference type="PRO" id="PR:Q5FWK3"/>
<dbReference type="Proteomes" id="UP000000589">
    <property type="component" value="Chromosome 2"/>
</dbReference>
<dbReference type="RNAct" id="Q5FWK3">
    <property type="molecule type" value="protein"/>
</dbReference>
<dbReference type="Bgee" id="ENSMUSG00000027247">
    <property type="expression patterns" value="Expressed in yolk sac and 266 other cell types or tissues"/>
</dbReference>
<dbReference type="ExpressionAtlas" id="Q5FWK3">
    <property type="expression patterns" value="baseline and differential"/>
</dbReference>
<dbReference type="GO" id="GO:0031252">
    <property type="term" value="C:cell leading edge"/>
    <property type="evidence" value="ECO:0000314"/>
    <property type="project" value="MGI"/>
</dbReference>
<dbReference type="GO" id="GO:0005929">
    <property type="term" value="C:cilium"/>
    <property type="evidence" value="ECO:0007669"/>
    <property type="project" value="Ensembl"/>
</dbReference>
<dbReference type="GO" id="GO:0005829">
    <property type="term" value="C:cytosol"/>
    <property type="evidence" value="ECO:0007669"/>
    <property type="project" value="Ensembl"/>
</dbReference>
<dbReference type="GO" id="GO:0010008">
    <property type="term" value="C:endosome membrane"/>
    <property type="evidence" value="ECO:0007669"/>
    <property type="project" value="Ensembl"/>
</dbReference>
<dbReference type="GO" id="GO:0048471">
    <property type="term" value="C:perinuclear region of cytoplasm"/>
    <property type="evidence" value="ECO:0007669"/>
    <property type="project" value="Ensembl"/>
</dbReference>
<dbReference type="GO" id="GO:0005886">
    <property type="term" value="C:plasma membrane"/>
    <property type="evidence" value="ECO:0000314"/>
    <property type="project" value="MGI"/>
</dbReference>
<dbReference type="GO" id="GO:0001726">
    <property type="term" value="C:ruffle"/>
    <property type="evidence" value="ECO:0000314"/>
    <property type="project" value="MGI"/>
</dbReference>
<dbReference type="GO" id="GO:0097443">
    <property type="term" value="C:sorting endosome"/>
    <property type="evidence" value="ECO:0007669"/>
    <property type="project" value="Ensembl"/>
</dbReference>
<dbReference type="GO" id="GO:0005096">
    <property type="term" value="F:GTPase activator activity"/>
    <property type="evidence" value="ECO:0000314"/>
    <property type="project" value="MGI"/>
</dbReference>
<dbReference type="GO" id="GO:0017124">
    <property type="term" value="F:SH3 domain binding"/>
    <property type="evidence" value="ECO:0007669"/>
    <property type="project" value="UniProtKB-KW"/>
</dbReference>
<dbReference type="GO" id="GO:0031267">
    <property type="term" value="F:small GTPase binding"/>
    <property type="evidence" value="ECO:0007669"/>
    <property type="project" value="Ensembl"/>
</dbReference>
<dbReference type="GO" id="GO:0016197">
    <property type="term" value="P:endosomal transport"/>
    <property type="evidence" value="ECO:0007669"/>
    <property type="project" value="Ensembl"/>
</dbReference>
<dbReference type="GO" id="GO:2001136">
    <property type="term" value="P:negative regulation of endocytic recycling"/>
    <property type="evidence" value="ECO:0007669"/>
    <property type="project" value="Ensembl"/>
</dbReference>
<dbReference type="GO" id="GO:0007264">
    <property type="term" value="P:small GTPase-mediated signal transduction"/>
    <property type="evidence" value="ECO:0000266"/>
    <property type="project" value="MGI"/>
</dbReference>
<dbReference type="GO" id="GO:0033572">
    <property type="term" value="P:transferrin transport"/>
    <property type="evidence" value="ECO:0007669"/>
    <property type="project" value="Ensembl"/>
</dbReference>
<dbReference type="CDD" id="cd04404">
    <property type="entry name" value="RhoGAP-p50rhoGAP"/>
    <property type="match status" value="1"/>
</dbReference>
<dbReference type="CDD" id="cd00170">
    <property type="entry name" value="SEC14"/>
    <property type="match status" value="1"/>
</dbReference>
<dbReference type="FunFam" id="1.10.555.10:FF:000024">
    <property type="entry name" value="Rho GTPase-activating protein 1"/>
    <property type="match status" value="1"/>
</dbReference>
<dbReference type="FunFam" id="3.40.525.10:FF:000007">
    <property type="entry name" value="rho GTPase-activating protein 1"/>
    <property type="match status" value="1"/>
</dbReference>
<dbReference type="Gene3D" id="3.40.525.10">
    <property type="entry name" value="CRAL-TRIO lipid binding domain"/>
    <property type="match status" value="1"/>
</dbReference>
<dbReference type="Gene3D" id="1.10.555.10">
    <property type="entry name" value="Rho GTPase activation protein"/>
    <property type="match status" value="1"/>
</dbReference>
<dbReference type="InterPro" id="IPR049592">
    <property type="entry name" value="ARHGAP1_RhoGAP"/>
</dbReference>
<dbReference type="InterPro" id="IPR001251">
    <property type="entry name" value="CRAL-TRIO_dom"/>
</dbReference>
<dbReference type="InterPro" id="IPR036865">
    <property type="entry name" value="CRAL-TRIO_dom_sf"/>
</dbReference>
<dbReference type="InterPro" id="IPR008936">
    <property type="entry name" value="Rho_GTPase_activation_prot"/>
</dbReference>
<dbReference type="InterPro" id="IPR000198">
    <property type="entry name" value="RhoGAP_dom"/>
</dbReference>
<dbReference type="PANTHER" id="PTHR45808:SF6">
    <property type="entry name" value="RHO GTPASE-ACTIVATING PROTEIN 1"/>
    <property type="match status" value="1"/>
</dbReference>
<dbReference type="PANTHER" id="PTHR45808">
    <property type="entry name" value="RHO GTPASE-ACTIVATING PROTEIN 68F"/>
    <property type="match status" value="1"/>
</dbReference>
<dbReference type="Pfam" id="PF13716">
    <property type="entry name" value="CRAL_TRIO_2"/>
    <property type="match status" value="1"/>
</dbReference>
<dbReference type="Pfam" id="PF00620">
    <property type="entry name" value="RhoGAP"/>
    <property type="match status" value="1"/>
</dbReference>
<dbReference type="SMART" id="SM00324">
    <property type="entry name" value="RhoGAP"/>
    <property type="match status" value="1"/>
</dbReference>
<dbReference type="SMART" id="SM00516">
    <property type="entry name" value="SEC14"/>
    <property type="match status" value="1"/>
</dbReference>
<dbReference type="SUPFAM" id="SSF52087">
    <property type="entry name" value="CRAL/TRIO domain"/>
    <property type="match status" value="1"/>
</dbReference>
<dbReference type="SUPFAM" id="SSF48350">
    <property type="entry name" value="GTPase activation domain, GAP"/>
    <property type="match status" value="1"/>
</dbReference>
<dbReference type="PROSITE" id="PS50191">
    <property type="entry name" value="CRAL_TRIO"/>
    <property type="match status" value="1"/>
</dbReference>
<dbReference type="PROSITE" id="PS50238">
    <property type="entry name" value="RHOGAP"/>
    <property type="match status" value="1"/>
</dbReference>
<comment type="function">
    <text evidence="1">GTPase activator for the Rho, Rac and Cdc42 proteins, converting them to the putatively inactive GDP-bound state. Cdc42 seems to be the preferred substrate (By similarity).</text>
</comment>
<comment type="subunit">
    <text evidence="1">Found in a complex with XPO7, EIF4A1, ARHGAP1, VPS26A, VPS29, VPS35 and SFN. Interacts with BNIPL (By similarity).</text>
</comment>
<comment type="subcellular location">
    <subcellularLocation>
        <location evidence="1">Cytoplasm</location>
    </subcellularLocation>
</comment>
<evidence type="ECO:0000250" key="1"/>
<evidence type="ECO:0000250" key="2">
    <source>
        <dbReference type="UniProtKB" id="Q07960"/>
    </source>
</evidence>
<evidence type="ECO:0000255" key="3">
    <source>
        <dbReference type="PROSITE-ProRule" id="PRU00056"/>
    </source>
</evidence>
<evidence type="ECO:0000255" key="4">
    <source>
        <dbReference type="PROSITE-ProRule" id="PRU00172"/>
    </source>
</evidence>
<evidence type="ECO:0000256" key="5">
    <source>
        <dbReference type="SAM" id="MobiDB-lite"/>
    </source>
</evidence>
<evidence type="ECO:0000305" key="6"/>
<evidence type="ECO:0007744" key="7">
    <source>
    </source>
</evidence>
<evidence type="ECO:0007744" key="8">
    <source>
    </source>
</evidence>
<reference key="1">
    <citation type="journal article" date="2005" name="Science">
        <title>The transcriptional landscape of the mammalian genome.</title>
        <authorList>
            <person name="Carninci P."/>
            <person name="Kasukawa T."/>
            <person name="Katayama S."/>
            <person name="Gough J."/>
            <person name="Frith M.C."/>
            <person name="Maeda N."/>
            <person name="Oyama R."/>
            <person name="Ravasi T."/>
            <person name="Lenhard B."/>
            <person name="Wells C."/>
            <person name="Kodzius R."/>
            <person name="Shimokawa K."/>
            <person name="Bajic V.B."/>
            <person name="Brenner S.E."/>
            <person name="Batalov S."/>
            <person name="Forrest A.R."/>
            <person name="Zavolan M."/>
            <person name="Davis M.J."/>
            <person name="Wilming L.G."/>
            <person name="Aidinis V."/>
            <person name="Allen J.E."/>
            <person name="Ambesi-Impiombato A."/>
            <person name="Apweiler R."/>
            <person name="Aturaliya R.N."/>
            <person name="Bailey T.L."/>
            <person name="Bansal M."/>
            <person name="Baxter L."/>
            <person name="Beisel K.W."/>
            <person name="Bersano T."/>
            <person name="Bono H."/>
            <person name="Chalk A.M."/>
            <person name="Chiu K.P."/>
            <person name="Choudhary V."/>
            <person name="Christoffels A."/>
            <person name="Clutterbuck D.R."/>
            <person name="Crowe M.L."/>
            <person name="Dalla E."/>
            <person name="Dalrymple B.P."/>
            <person name="de Bono B."/>
            <person name="Della Gatta G."/>
            <person name="di Bernardo D."/>
            <person name="Down T."/>
            <person name="Engstrom P."/>
            <person name="Fagiolini M."/>
            <person name="Faulkner G."/>
            <person name="Fletcher C.F."/>
            <person name="Fukushima T."/>
            <person name="Furuno M."/>
            <person name="Futaki S."/>
            <person name="Gariboldi M."/>
            <person name="Georgii-Hemming P."/>
            <person name="Gingeras T.R."/>
            <person name="Gojobori T."/>
            <person name="Green R.E."/>
            <person name="Gustincich S."/>
            <person name="Harbers M."/>
            <person name="Hayashi Y."/>
            <person name="Hensch T.K."/>
            <person name="Hirokawa N."/>
            <person name="Hill D."/>
            <person name="Huminiecki L."/>
            <person name="Iacono M."/>
            <person name="Ikeo K."/>
            <person name="Iwama A."/>
            <person name="Ishikawa T."/>
            <person name="Jakt M."/>
            <person name="Kanapin A."/>
            <person name="Katoh M."/>
            <person name="Kawasawa Y."/>
            <person name="Kelso J."/>
            <person name="Kitamura H."/>
            <person name="Kitano H."/>
            <person name="Kollias G."/>
            <person name="Krishnan S.P."/>
            <person name="Kruger A."/>
            <person name="Kummerfeld S.K."/>
            <person name="Kurochkin I.V."/>
            <person name="Lareau L.F."/>
            <person name="Lazarevic D."/>
            <person name="Lipovich L."/>
            <person name="Liu J."/>
            <person name="Liuni S."/>
            <person name="McWilliam S."/>
            <person name="Madan Babu M."/>
            <person name="Madera M."/>
            <person name="Marchionni L."/>
            <person name="Matsuda H."/>
            <person name="Matsuzawa S."/>
            <person name="Miki H."/>
            <person name="Mignone F."/>
            <person name="Miyake S."/>
            <person name="Morris K."/>
            <person name="Mottagui-Tabar S."/>
            <person name="Mulder N."/>
            <person name="Nakano N."/>
            <person name="Nakauchi H."/>
            <person name="Ng P."/>
            <person name="Nilsson R."/>
            <person name="Nishiguchi S."/>
            <person name="Nishikawa S."/>
            <person name="Nori F."/>
            <person name="Ohara O."/>
            <person name="Okazaki Y."/>
            <person name="Orlando V."/>
            <person name="Pang K.C."/>
            <person name="Pavan W.J."/>
            <person name="Pavesi G."/>
            <person name="Pesole G."/>
            <person name="Petrovsky N."/>
            <person name="Piazza S."/>
            <person name="Reed J."/>
            <person name="Reid J.F."/>
            <person name="Ring B.Z."/>
            <person name="Ringwald M."/>
            <person name="Rost B."/>
            <person name="Ruan Y."/>
            <person name="Salzberg S.L."/>
            <person name="Sandelin A."/>
            <person name="Schneider C."/>
            <person name="Schoenbach C."/>
            <person name="Sekiguchi K."/>
            <person name="Semple C.A."/>
            <person name="Seno S."/>
            <person name="Sessa L."/>
            <person name="Sheng Y."/>
            <person name="Shibata Y."/>
            <person name="Shimada H."/>
            <person name="Shimada K."/>
            <person name="Silva D."/>
            <person name="Sinclair B."/>
            <person name="Sperling S."/>
            <person name="Stupka E."/>
            <person name="Sugiura K."/>
            <person name="Sultana R."/>
            <person name="Takenaka Y."/>
            <person name="Taki K."/>
            <person name="Tammoja K."/>
            <person name="Tan S.L."/>
            <person name="Tang S."/>
            <person name="Taylor M.S."/>
            <person name="Tegner J."/>
            <person name="Teichmann S.A."/>
            <person name="Ueda H.R."/>
            <person name="van Nimwegen E."/>
            <person name="Verardo R."/>
            <person name="Wei C.L."/>
            <person name="Yagi K."/>
            <person name="Yamanishi H."/>
            <person name="Zabarovsky E."/>
            <person name="Zhu S."/>
            <person name="Zimmer A."/>
            <person name="Hide W."/>
            <person name="Bult C."/>
            <person name="Grimmond S.M."/>
            <person name="Teasdale R.D."/>
            <person name="Liu E.T."/>
            <person name="Brusic V."/>
            <person name="Quackenbush J."/>
            <person name="Wahlestedt C."/>
            <person name="Mattick J.S."/>
            <person name="Hume D.A."/>
            <person name="Kai C."/>
            <person name="Sasaki D."/>
            <person name="Tomaru Y."/>
            <person name="Fukuda S."/>
            <person name="Kanamori-Katayama M."/>
            <person name="Suzuki M."/>
            <person name="Aoki J."/>
            <person name="Arakawa T."/>
            <person name="Iida J."/>
            <person name="Imamura K."/>
            <person name="Itoh M."/>
            <person name="Kato T."/>
            <person name="Kawaji H."/>
            <person name="Kawagashira N."/>
            <person name="Kawashima T."/>
            <person name="Kojima M."/>
            <person name="Kondo S."/>
            <person name="Konno H."/>
            <person name="Nakano K."/>
            <person name="Ninomiya N."/>
            <person name="Nishio T."/>
            <person name="Okada M."/>
            <person name="Plessy C."/>
            <person name="Shibata K."/>
            <person name="Shiraki T."/>
            <person name="Suzuki S."/>
            <person name="Tagami M."/>
            <person name="Waki K."/>
            <person name="Watahiki A."/>
            <person name="Okamura-Oho Y."/>
            <person name="Suzuki H."/>
            <person name="Kawai J."/>
            <person name="Hayashizaki Y."/>
        </authorList>
    </citation>
    <scope>NUCLEOTIDE SEQUENCE [LARGE SCALE MRNA]</scope>
    <source>
        <strain>C57BL/6J</strain>
        <tissue>Heart</tissue>
    </source>
</reference>
<reference key="2">
    <citation type="journal article" date="2009" name="PLoS Biol.">
        <title>Lineage-specific biology revealed by a finished genome assembly of the mouse.</title>
        <authorList>
            <person name="Church D.M."/>
            <person name="Goodstadt L."/>
            <person name="Hillier L.W."/>
            <person name="Zody M.C."/>
            <person name="Goldstein S."/>
            <person name="She X."/>
            <person name="Bult C.J."/>
            <person name="Agarwala R."/>
            <person name="Cherry J.L."/>
            <person name="DiCuccio M."/>
            <person name="Hlavina W."/>
            <person name="Kapustin Y."/>
            <person name="Meric P."/>
            <person name="Maglott D."/>
            <person name="Birtle Z."/>
            <person name="Marques A.C."/>
            <person name="Graves T."/>
            <person name="Zhou S."/>
            <person name="Teague B."/>
            <person name="Potamousis K."/>
            <person name="Churas C."/>
            <person name="Place M."/>
            <person name="Herschleb J."/>
            <person name="Runnheim R."/>
            <person name="Forrest D."/>
            <person name="Amos-Landgraf J."/>
            <person name="Schwartz D.C."/>
            <person name="Cheng Z."/>
            <person name="Lindblad-Toh K."/>
            <person name="Eichler E.E."/>
            <person name="Ponting C.P."/>
        </authorList>
    </citation>
    <scope>NUCLEOTIDE SEQUENCE [LARGE SCALE GENOMIC DNA]</scope>
    <source>
        <strain>C57BL/6J</strain>
    </source>
</reference>
<reference key="3">
    <citation type="journal article" date="2004" name="Genome Res.">
        <title>The status, quality, and expansion of the NIH full-length cDNA project: the Mammalian Gene Collection (MGC).</title>
        <authorList>
            <consortium name="The MGC Project Team"/>
        </authorList>
    </citation>
    <scope>NUCLEOTIDE SEQUENCE [LARGE SCALE MRNA]</scope>
    <source>
        <strain>C57BL/6J</strain>
        <strain>FVB/N</strain>
        <tissue>Brain</tissue>
        <tissue>Mammary tumor</tissue>
    </source>
</reference>
<reference key="4">
    <citation type="journal article" date="2007" name="J. Immunol.">
        <title>Quantitative time-resolved phosphoproteomic analysis of mast cell signaling.</title>
        <authorList>
            <person name="Cao L."/>
            <person name="Yu K."/>
            <person name="Banh C."/>
            <person name="Nguyen V."/>
            <person name="Ritz A."/>
            <person name="Raphael B.J."/>
            <person name="Kawakami Y."/>
            <person name="Kawakami T."/>
            <person name="Salomon A.R."/>
        </authorList>
    </citation>
    <scope>PHOSPHORYLATION [LARGE SCALE ANALYSIS] AT TYR-65</scope>
    <scope>IDENTIFICATION BY MASS SPECTROMETRY [LARGE SCALE ANALYSIS]</scope>
    <source>
        <tissue>Mast cell</tissue>
    </source>
</reference>
<reference key="5">
    <citation type="journal article" date="2010" name="Cell">
        <title>A tissue-specific atlas of mouse protein phosphorylation and expression.</title>
        <authorList>
            <person name="Huttlin E.L."/>
            <person name="Jedrychowski M.P."/>
            <person name="Elias J.E."/>
            <person name="Goswami T."/>
            <person name="Rad R."/>
            <person name="Beausoleil S.A."/>
            <person name="Villen J."/>
            <person name="Haas W."/>
            <person name="Sowa M.E."/>
            <person name="Gygi S.P."/>
        </authorList>
    </citation>
    <scope>PHOSPHORYLATION [LARGE SCALE ANALYSIS] AT SER-44; SER-50 AND SER-51</scope>
    <scope>IDENTIFICATION BY MASS SPECTROMETRY [LARGE SCALE ANALYSIS]</scope>
    <source>
        <tissue>Brain</tissue>
        <tissue>Brown adipose tissue</tissue>
        <tissue>Heart</tissue>
        <tissue>Kidney</tissue>
        <tissue>Liver</tissue>
        <tissue>Lung</tissue>
        <tissue>Pancreas</tissue>
        <tissue>Spleen</tissue>
        <tissue>Testis</tissue>
    </source>
</reference>